<protein>
    <recommendedName>
        <fullName>C-C motif chemokine 20</fullName>
    </recommendedName>
    <alternativeName>
        <fullName>Beta-chemokine exodus-1</fullName>
    </alternativeName>
    <alternativeName>
        <fullName>CC chemokine LARC</fullName>
    </alternativeName>
    <alternativeName>
        <fullName>Liver and activation-regulated chemokine</fullName>
    </alternativeName>
    <alternativeName>
        <fullName>Macrophage inflammatory protein 3 alpha</fullName>
        <shortName>MIP-3-alpha</shortName>
    </alternativeName>
    <alternativeName>
        <fullName>Small-inducible cytokine A20</fullName>
    </alternativeName>
    <component>
        <recommendedName>
            <fullName>CCL20(1-67)</fullName>
        </recommendedName>
    </component>
    <component>
        <recommendedName>
            <fullName>CCL20(1-64)</fullName>
        </recommendedName>
    </component>
    <component>
        <recommendedName>
            <fullName>CCL20(2-70)</fullName>
        </recommendedName>
    </component>
</protein>
<dbReference type="EMBL" id="U77035">
    <property type="protein sequence ID" value="AAC50943.1"/>
    <property type="molecule type" value="mRNA"/>
</dbReference>
<dbReference type="EMBL" id="D86955">
    <property type="protein sequence ID" value="BAA13191.1"/>
    <property type="molecule type" value="mRNA"/>
</dbReference>
<dbReference type="EMBL" id="U64197">
    <property type="protein sequence ID" value="AAB61534.1"/>
    <property type="molecule type" value="mRNA"/>
</dbReference>
<dbReference type="EMBL" id="AC073065">
    <property type="protein sequence ID" value="AAX93214.1"/>
    <property type="molecule type" value="Genomic_DNA"/>
</dbReference>
<dbReference type="EMBL" id="BC020698">
    <property type="protein sequence ID" value="AAH20698.1"/>
    <property type="molecule type" value="mRNA"/>
</dbReference>
<dbReference type="CCDS" id="CCDS2469.1">
    <molecule id="P78556-1"/>
</dbReference>
<dbReference type="CCDS" id="CCDS46536.1">
    <molecule id="P78556-2"/>
</dbReference>
<dbReference type="RefSeq" id="NP_001123518.1">
    <molecule id="P78556-2"/>
    <property type="nucleotide sequence ID" value="NM_001130046.2"/>
</dbReference>
<dbReference type="RefSeq" id="NP_004582.1">
    <molecule id="P78556-1"/>
    <property type="nucleotide sequence ID" value="NM_004591.3"/>
</dbReference>
<dbReference type="PDB" id="1M8A">
    <property type="method" value="X-ray"/>
    <property type="resolution" value="1.70 A"/>
    <property type="chains" value="A/B=27-96"/>
</dbReference>
<dbReference type="PDB" id="2HCI">
    <property type="method" value="X-ray"/>
    <property type="resolution" value="1.81 A"/>
    <property type="chains" value="A/B=27-95"/>
</dbReference>
<dbReference type="PDB" id="2JYO">
    <property type="method" value="NMR"/>
    <property type="chains" value="A=27-96"/>
</dbReference>
<dbReference type="PDB" id="5UR7">
    <property type="method" value="X-ray"/>
    <property type="resolution" value="2.00 A"/>
    <property type="chains" value="A/B=27-96"/>
</dbReference>
<dbReference type="PDB" id="6WWZ">
    <property type="method" value="EM"/>
    <property type="resolution" value="3.34 A"/>
    <property type="chains" value="C=27-96"/>
</dbReference>
<dbReference type="PDB" id="7T1E">
    <property type="method" value="X-ray"/>
    <property type="resolution" value="1.46 A"/>
    <property type="chains" value="A/B/C/D/E=27-96"/>
</dbReference>
<dbReference type="PDBsum" id="1M8A"/>
<dbReference type="PDBsum" id="2HCI"/>
<dbReference type="PDBsum" id="2JYO"/>
<dbReference type="PDBsum" id="5UR7"/>
<dbReference type="PDBsum" id="6WWZ"/>
<dbReference type="PDBsum" id="7T1E"/>
<dbReference type="EMDB" id="EMD-21950"/>
<dbReference type="SMR" id="P78556"/>
<dbReference type="BioGRID" id="112267">
    <property type="interactions" value="14"/>
</dbReference>
<dbReference type="DIP" id="DIP-5864N"/>
<dbReference type="FunCoup" id="P78556">
    <property type="interactions" value="993"/>
</dbReference>
<dbReference type="IntAct" id="P78556">
    <property type="interactions" value="12"/>
</dbReference>
<dbReference type="MINT" id="P78556"/>
<dbReference type="STRING" id="9606.ENSP00000351671"/>
<dbReference type="GlyGen" id="P78556">
    <property type="glycosylation" value="1 site"/>
</dbReference>
<dbReference type="iPTMnet" id="P78556"/>
<dbReference type="BioMuta" id="CCL20"/>
<dbReference type="DMDM" id="2829668"/>
<dbReference type="jPOST" id="P78556"/>
<dbReference type="MassIVE" id="P78556"/>
<dbReference type="PaxDb" id="9606-ENSP00000351671"/>
<dbReference type="PeptideAtlas" id="P78556"/>
<dbReference type="ProteomicsDB" id="57650">
    <molecule id="P78556-1"/>
</dbReference>
<dbReference type="ProteomicsDB" id="57651">
    <molecule id="P78556-2"/>
</dbReference>
<dbReference type="ABCD" id="P78556">
    <property type="antibodies" value="11 sequenced antibodies"/>
</dbReference>
<dbReference type="Antibodypedia" id="20171">
    <property type="antibodies" value="698 antibodies from 39 providers"/>
</dbReference>
<dbReference type="DNASU" id="6364"/>
<dbReference type="Ensembl" id="ENST00000358813.5">
    <molecule id="P78556-1"/>
    <property type="protein sequence ID" value="ENSP00000351671.4"/>
    <property type="gene ID" value="ENSG00000115009.13"/>
</dbReference>
<dbReference type="Ensembl" id="ENST00000409189.7">
    <molecule id="P78556-2"/>
    <property type="protein sequence ID" value="ENSP00000386273.3"/>
    <property type="gene ID" value="ENSG00000115009.13"/>
</dbReference>
<dbReference type="GeneID" id="6364"/>
<dbReference type="KEGG" id="hsa:6364"/>
<dbReference type="MANE-Select" id="ENST00000358813.5">
    <property type="protein sequence ID" value="ENSP00000351671.4"/>
    <property type="RefSeq nucleotide sequence ID" value="NM_004591.3"/>
    <property type="RefSeq protein sequence ID" value="NP_004582.1"/>
</dbReference>
<dbReference type="UCSC" id="uc002vpl.3">
    <molecule id="P78556-1"/>
    <property type="organism name" value="human"/>
</dbReference>
<dbReference type="AGR" id="HGNC:10619"/>
<dbReference type="CTD" id="6364"/>
<dbReference type="DisGeNET" id="6364"/>
<dbReference type="GeneCards" id="CCL20"/>
<dbReference type="HGNC" id="HGNC:10619">
    <property type="gene designation" value="CCL20"/>
</dbReference>
<dbReference type="HPA" id="ENSG00000115009">
    <property type="expression patterns" value="Group enriched (gallbladder, lymphoid tissue, urinary bladder)"/>
</dbReference>
<dbReference type="MIM" id="601960">
    <property type="type" value="gene"/>
</dbReference>
<dbReference type="neXtProt" id="NX_P78556"/>
<dbReference type="OpenTargets" id="ENSG00000115009"/>
<dbReference type="PharmGKB" id="PA35551"/>
<dbReference type="VEuPathDB" id="HostDB:ENSG00000115009"/>
<dbReference type="eggNOG" id="ENOG502S776">
    <property type="taxonomic scope" value="Eukaryota"/>
</dbReference>
<dbReference type="GeneTree" id="ENSGT01130000278316"/>
<dbReference type="HOGENOM" id="CLU_141716_3_3_1"/>
<dbReference type="InParanoid" id="P78556"/>
<dbReference type="OMA" id="NWVKQAV"/>
<dbReference type="OrthoDB" id="8870994at2759"/>
<dbReference type="PAN-GO" id="P78556">
    <property type="GO annotations" value="14 GO annotations based on evolutionary models"/>
</dbReference>
<dbReference type="PhylomeDB" id="P78556"/>
<dbReference type="TreeFam" id="TF334888"/>
<dbReference type="PathwayCommons" id="P78556"/>
<dbReference type="Reactome" id="R-HSA-380108">
    <property type="pathway name" value="Chemokine receptors bind chemokines"/>
</dbReference>
<dbReference type="Reactome" id="R-HSA-418594">
    <property type="pathway name" value="G alpha (i) signalling events"/>
</dbReference>
<dbReference type="Reactome" id="R-HSA-6783783">
    <property type="pathway name" value="Interleukin-10 signaling"/>
</dbReference>
<dbReference type="SignaLink" id="P78556"/>
<dbReference type="SIGNOR" id="P78556"/>
<dbReference type="BioGRID-ORCS" id="6364">
    <property type="hits" value="11 hits in 1144 CRISPR screens"/>
</dbReference>
<dbReference type="ChiTaRS" id="CCL20">
    <property type="organism name" value="human"/>
</dbReference>
<dbReference type="EvolutionaryTrace" id="P78556"/>
<dbReference type="GeneWiki" id="CCL20"/>
<dbReference type="GenomeRNAi" id="6364"/>
<dbReference type="Pharos" id="P78556">
    <property type="development level" value="Tbio"/>
</dbReference>
<dbReference type="PRO" id="PR:P78556"/>
<dbReference type="Proteomes" id="UP000005640">
    <property type="component" value="Chromosome 2"/>
</dbReference>
<dbReference type="RNAct" id="P78556">
    <property type="molecule type" value="protein"/>
</dbReference>
<dbReference type="Bgee" id="ENSG00000115009">
    <property type="expression patterns" value="Expressed in epithelium of nasopharynx and 126 other cell types or tissues"/>
</dbReference>
<dbReference type="ExpressionAtlas" id="P78556">
    <property type="expression patterns" value="baseline and differential"/>
</dbReference>
<dbReference type="GO" id="GO:0005576">
    <property type="term" value="C:extracellular region"/>
    <property type="evidence" value="ECO:0000304"/>
    <property type="project" value="Reactome"/>
</dbReference>
<dbReference type="GO" id="GO:0005615">
    <property type="term" value="C:extracellular space"/>
    <property type="evidence" value="ECO:0000304"/>
    <property type="project" value="ProtInc"/>
</dbReference>
<dbReference type="GO" id="GO:0031731">
    <property type="term" value="F:CCR6 chemokine receptor binding"/>
    <property type="evidence" value="ECO:0000314"/>
    <property type="project" value="UniProtKB"/>
</dbReference>
<dbReference type="GO" id="GO:0008009">
    <property type="term" value="F:chemokine activity"/>
    <property type="evidence" value="ECO:0000304"/>
    <property type="project" value="ProtInc"/>
</dbReference>
<dbReference type="GO" id="GO:0019722">
    <property type="term" value="P:calcium-mediated signaling"/>
    <property type="evidence" value="ECO:0000314"/>
    <property type="project" value="UniProtKB"/>
</dbReference>
<dbReference type="GO" id="GO:0060326">
    <property type="term" value="P:cell chemotaxis"/>
    <property type="evidence" value="ECO:0000314"/>
    <property type="project" value="UniProtKB"/>
</dbReference>
<dbReference type="GO" id="GO:0007267">
    <property type="term" value="P:cell-cell signaling"/>
    <property type="evidence" value="ECO:0000304"/>
    <property type="project" value="ProtInc"/>
</dbReference>
<dbReference type="GO" id="GO:0006935">
    <property type="term" value="P:chemotaxis"/>
    <property type="evidence" value="ECO:0000314"/>
    <property type="project" value="UniProtKB"/>
</dbReference>
<dbReference type="GO" id="GO:0042742">
    <property type="term" value="P:defense response to bacterium"/>
    <property type="evidence" value="ECO:0007669"/>
    <property type="project" value="UniProtKB-KW"/>
</dbReference>
<dbReference type="GO" id="GO:0006955">
    <property type="term" value="P:immune response"/>
    <property type="evidence" value="ECO:0000304"/>
    <property type="project" value="ProtInc"/>
</dbReference>
<dbReference type="GO" id="GO:0006954">
    <property type="term" value="P:inflammatory response"/>
    <property type="evidence" value="ECO:0000304"/>
    <property type="project" value="ProtInc"/>
</dbReference>
<dbReference type="GO" id="GO:2000406">
    <property type="term" value="P:positive regulation of T cell migration"/>
    <property type="evidence" value="ECO:0000314"/>
    <property type="project" value="MGI"/>
</dbReference>
<dbReference type="GO" id="GO:0007165">
    <property type="term" value="P:signal transduction"/>
    <property type="evidence" value="ECO:0000304"/>
    <property type="project" value="ProtInc"/>
</dbReference>
<dbReference type="GO" id="GO:0072678">
    <property type="term" value="P:T cell migration"/>
    <property type="evidence" value="ECO:0000250"/>
    <property type="project" value="UniProtKB"/>
</dbReference>
<dbReference type="GO" id="GO:0072679">
    <property type="term" value="P:thymocyte migration"/>
    <property type="evidence" value="ECO:0000250"/>
    <property type="project" value="UniProtKB"/>
</dbReference>
<dbReference type="CDD" id="cd01119">
    <property type="entry name" value="Chemokine_CC_DCCL"/>
    <property type="match status" value="1"/>
</dbReference>
<dbReference type="FunFam" id="2.40.50.40:FF:000012">
    <property type="entry name" value="C-C motif chemokine"/>
    <property type="match status" value="1"/>
</dbReference>
<dbReference type="Gene3D" id="2.40.50.40">
    <property type="match status" value="1"/>
</dbReference>
<dbReference type="InterPro" id="IPR039809">
    <property type="entry name" value="Chemokine_b/g/d"/>
</dbReference>
<dbReference type="InterPro" id="IPR000827">
    <property type="entry name" value="Chemokine_CC_CS"/>
</dbReference>
<dbReference type="InterPro" id="IPR034133">
    <property type="entry name" value="Chemokine_CC_DCCL"/>
</dbReference>
<dbReference type="InterPro" id="IPR001811">
    <property type="entry name" value="Chemokine_IL8-like_dom"/>
</dbReference>
<dbReference type="InterPro" id="IPR036048">
    <property type="entry name" value="Interleukin_8-like_sf"/>
</dbReference>
<dbReference type="PANTHER" id="PTHR12015:SF108">
    <property type="entry name" value="C-C MOTIF CHEMOKINE 20"/>
    <property type="match status" value="1"/>
</dbReference>
<dbReference type="PANTHER" id="PTHR12015">
    <property type="entry name" value="SMALL INDUCIBLE CYTOKINE A"/>
    <property type="match status" value="1"/>
</dbReference>
<dbReference type="Pfam" id="PF00048">
    <property type="entry name" value="IL8"/>
    <property type="match status" value="1"/>
</dbReference>
<dbReference type="PRINTS" id="PR00436">
    <property type="entry name" value="INTERLEUKIN8"/>
</dbReference>
<dbReference type="SMART" id="SM00199">
    <property type="entry name" value="SCY"/>
    <property type="match status" value="1"/>
</dbReference>
<dbReference type="SUPFAM" id="SSF54117">
    <property type="entry name" value="Interleukin 8-like chemokines"/>
    <property type="match status" value="1"/>
</dbReference>
<dbReference type="PROSITE" id="PS00472">
    <property type="entry name" value="SMALL_CYTOKINES_CC"/>
    <property type="match status" value="1"/>
</dbReference>
<proteinExistence type="evidence at protein level"/>
<evidence type="ECO:0000250" key="1">
    <source>
        <dbReference type="UniProtKB" id="O89093"/>
    </source>
</evidence>
<evidence type="ECO:0000269" key="2">
    <source>
    </source>
</evidence>
<evidence type="ECO:0000269" key="3">
    <source>
    </source>
</evidence>
<evidence type="ECO:0000269" key="4">
    <source>
    </source>
</evidence>
<evidence type="ECO:0000269" key="5">
    <source>
    </source>
</evidence>
<evidence type="ECO:0000269" key="6">
    <source>
    </source>
</evidence>
<evidence type="ECO:0000269" key="7">
    <source>
    </source>
</evidence>
<evidence type="ECO:0000269" key="8">
    <source>
    </source>
</evidence>
<evidence type="ECO:0000269" key="9">
    <source>
    </source>
</evidence>
<evidence type="ECO:0000269" key="10">
    <source>
    </source>
</evidence>
<evidence type="ECO:0000303" key="11">
    <source>
    </source>
</evidence>
<evidence type="ECO:0000303" key="12">
    <source>
    </source>
</evidence>
<evidence type="ECO:0000303" key="13">
    <source>
    </source>
</evidence>
<evidence type="ECO:0000303" key="14">
    <source>
    </source>
</evidence>
<evidence type="ECO:0000305" key="15"/>
<evidence type="ECO:0007829" key="16">
    <source>
        <dbReference type="PDB" id="6WWZ"/>
    </source>
</evidence>
<evidence type="ECO:0007829" key="17">
    <source>
        <dbReference type="PDB" id="7T1E"/>
    </source>
</evidence>
<accession>P78556</accession>
<accession>Q53S51</accession>
<accession>Q99664</accession>
<name>CCL20_HUMAN</name>
<feature type="signal peptide" evidence="9">
    <location>
        <begin position="1"/>
        <end position="26"/>
    </location>
</feature>
<feature type="chain" id="PRO_0000005217" description="C-C motif chemokine 20">
    <location>
        <begin position="27"/>
        <end position="96"/>
    </location>
</feature>
<feature type="chain" id="PRO_0000041854" description="CCL20(1-67)">
    <location>
        <begin position="27"/>
        <end position="93"/>
    </location>
</feature>
<feature type="chain" id="PRO_0000041855" description="CCL20(1-64)">
    <location>
        <begin position="27"/>
        <end position="90"/>
    </location>
</feature>
<feature type="chain" id="PRO_0000041856" description="CCL20(2-70)">
    <location>
        <begin position="28"/>
        <end position="96"/>
    </location>
</feature>
<feature type="disulfide bond">
    <location>
        <begin position="32"/>
        <end position="58"/>
    </location>
</feature>
<feature type="disulfide bond">
    <location>
        <begin position="33"/>
        <end position="74"/>
    </location>
</feature>
<feature type="splice variant" id="VSP_001061" description="In isoform 2." evidence="11 12 14">
    <location>
        <position position="26"/>
    </location>
</feature>
<feature type="sequence variant" id="VAR_011915" description="In dbSNP:rs1049617.">
    <original>V</original>
    <variation>M</variation>
    <location>
        <position position="47"/>
    </location>
</feature>
<feature type="helix" evidence="17">
    <location>
        <begin position="43"/>
        <end position="45"/>
    </location>
</feature>
<feature type="strand" evidence="17">
    <location>
        <begin position="46"/>
        <end position="52"/>
    </location>
</feature>
<feature type="helix" evidence="17">
    <location>
        <begin position="54"/>
        <end position="56"/>
    </location>
</feature>
<feature type="strand" evidence="17">
    <location>
        <begin position="58"/>
        <end position="60"/>
    </location>
</feature>
<feature type="strand" evidence="17">
    <location>
        <begin position="62"/>
        <end position="67"/>
    </location>
</feature>
<feature type="strand" evidence="16">
    <location>
        <begin position="68"/>
        <end position="70"/>
    </location>
</feature>
<feature type="strand" evidence="17">
    <location>
        <begin position="73"/>
        <end position="75"/>
    </location>
</feature>
<feature type="helix" evidence="17">
    <location>
        <begin position="80"/>
        <end position="95"/>
    </location>
</feature>
<sequence>MCCTKSLLLAALMSVLLLHLCGESEAASNFDCCLGYTDRILHPKFIVGFTRQLANEGCDINAIIFHTKKKLSVCANPKQTWVKYIVRLLSKKVKNM</sequence>
<reference key="1">
    <citation type="journal article" date="1997" name="J. Immunol.">
        <title>Identification through bioinformatics of two new macrophage proinflammatory human chemokines: MIP-3alpha and MIP-3beta.</title>
        <authorList>
            <person name="Rossi D.L."/>
            <person name="Vicari A.P."/>
            <person name="Franz-Bacon K."/>
            <person name="McClanahan T.K."/>
            <person name="Zlotnik A."/>
        </authorList>
    </citation>
    <scope>NUCLEOTIDE SEQUENCE [MRNA] (ISOFORM 1)</scope>
    <scope>INDUCTION</scope>
    <scope>TISSUE SPECIFICITY</scope>
</reference>
<reference key="2">
    <citation type="journal article" date="1997" name="J. Biol. Chem.">
        <title>Molecular cloning of a novel human CC chemokine liver and activation-regulated chemokine (LARC) expressed in liver. Chemotactic activity for lymphocytes and gene localization on chromosome 2.</title>
        <authorList>
            <person name="Hieshima K."/>
            <person name="Imai T."/>
            <person name="Opdenakker G."/>
            <person name="van Damme J."/>
            <person name="Kusuda J."/>
            <person name="Tei H."/>
            <person name="Sakaki Y."/>
            <person name="Takatsuki K."/>
            <person name="Miura R."/>
            <person name="Yoshie O."/>
            <person name="Nomiyama H."/>
        </authorList>
    </citation>
    <scope>NUCLEOTIDE SEQUENCE [MRNA] (ISOFORM 1)</scope>
    <scope>PROTEIN SEQUENCE OF N-TERMINUS</scope>
    <scope>TISSUE SPECIFICITY</scope>
    <scope>FUNCTION</scope>
    <source>
        <tissue>Liver</tissue>
    </source>
</reference>
<reference key="3">
    <citation type="journal article" date="1997" name="Blood">
        <title>Cloning and characterization of Exodus, a novel beta-chemokine.</title>
        <authorList>
            <person name="Hromas R.A."/>
            <person name="Gray P.W."/>
            <person name="Chantry D."/>
            <person name="Godiska R."/>
            <person name="Krathwohl M."/>
            <person name="Fife K."/>
            <person name="Bell G.I."/>
            <person name="Takeda J."/>
            <person name="Aronica S."/>
            <person name="Gordon M."/>
            <person name="Cooper S."/>
            <person name="Broxmeyer H.E."/>
            <person name="Klemsz M.J."/>
        </authorList>
    </citation>
    <scope>NUCLEOTIDE SEQUENCE [MRNA] (ISOFORM 2)</scope>
    <scope>INDUCTION</scope>
    <scope>FUNCTION</scope>
    <scope>TISSUE SPECIFICITY</scope>
    <source>
        <tissue>Pancreas</tissue>
    </source>
</reference>
<reference key="4">
    <citation type="journal article" date="2001" name="Genomics">
        <title>Genomic organization of the CC chemokine mip-3alpha/CCL20/larc/ exodus/SCYA20, showing gene structure, splice variants, and chromosome localization.</title>
        <authorList>
            <person name="Nelson R.T."/>
            <person name="Boyd J."/>
            <person name="Gladue R.P."/>
            <person name="Paradis T."/>
            <person name="Thomas R."/>
            <person name="Cunningham A.C."/>
            <person name="Lira P."/>
            <person name="Brissette W.H."/>
            <person name="Hayes L."/>
            <person name="Hames L.M."/>
            <person name="Neote K.S."/>
            <person name="McColl S.R."/>
        </authorList>
    </citation>
    <scope>NUCLEOTIDE SEQUENCE [MRNA] (ISOFORMS 1 AND 2)</scope>
    <scope>FUNCTION</scope>
    <scope>TISSUE SPECIFICITY</scope>
    <source>
        <tissue>Liver</tissue>
    </source>
</reference>
<reference key="5">
    <citation type="journal article" date="2005" name="Nature">
        <title>Generation and annotation of the DNA sequences of human chromosomes 2 and 4.</title>
        <authorList>
            <person name="Hillier L.W."/>
            <person name="Graves T.A."/>
            <person name="Fulton R.S."/>
            <person name="Fulton L.A."/>
            <person name="Pepin K.H."/>
            <person name="Minx P."/>
            <person name="Wagner-McPherson C."/>
            <person name="Layman D."/>
            <person name="Wylie K."/>
            <person name="Sekhon M."/>
            <person name="Becker M.C."/>
            <person name="Fewell G.A."/>
            <person name="Delehaunty K.D."/>
            <person name="Miner T.L."/>
            <person name="Nash W.E."/>
            <person name="Kremitzki C."/>
            <person name="Oddy L."/>
            <person name="Du H."/>
            <person name="Sun H."/>
            <person name="Bradshaw-Cordum H."/>
            <person name="Ali J."/>
            <person name="Carter J."/>
            <person name="Cordes M."/>
            <person name="Harris A."/>
            <person name="Isak A."/>
            <person name="van Brunt A."/>
            <person name="Nguyen C."/>
            <person name="Du F."/>
            <person name="Courtney L."/>
            <person name="Kalicki J."/>
            <person name="Ozersky P."/>
            <person name="Abbott S."/>
            <person name="Armstrong J."/>
            <person name="Belter E.A."/>
            <person name="Caruso L."/>
            <person name="Cedroni M."/>
            <person name="Cotton M."/>
            <person name="Davidson T."/>
            <person name="Desai A."/>
            <person name="Elliott G."/>
            <person name="Erb T."/>
            <person name="Fronick C."/>
            <person name="Gaige T."/>
            <person name="Haakenson W."/>
            <person name="Haglund K."/>
            <person name="Holmes A."/>
            <person name="Harkins R."/>
            <person name="Kim K."/>
            <person name="Kruchowski S.S."/>
            <person name="Strong C.M."/>
            <person name="Grewal N."/>
            <person name="Goyea E."/>
            <person name="Hou S."/>
            <person name="Levy A."/>
            <person name="Martinka S."/>
            <person name="Mead K."/>
            <person name="McLellan M.D."/>
            <person name="Meyer R."/>
            <person name="Randall-Maher J."/>
            <person name="Tomlinson C."/>
            <person name="Dauphin-Kohlberg S."/>
            <person name="Kozlowicz-Reilly A."/>
            <person name="Shah N."/>
            <person name="Swearengen-Shahid S."/>
            <person name="Snider J."/>
            <person name="Strong J.T."/>
            <person name="Thompson J."/>
            <person name="Yoakum M."/>
            <person name="Leonard S."/>
            <person name="Pearman C."/>
            <person name="Trani L."/>
            <person name="Radionenko M."/>
            <person name="Waligorski J.E."/>
            <person name="Wang C."/>
            <person name="Rock S.M."/>
            <person name="Tin-Wollam A.-M."/>
            <person name="Maupin R."/>
            <person name="Latreille P."/>
            <person name="Wendl M.C."/>
            <person name="Yang S.-P."/>
            <person name="Pohl C."/>
            <person name="Wallis J.W."/>
            <person name="Spieth J."/>
            <person name="Bieri T.A."/>
            <person name="Berkowicz N."/>
            <person name="Nelson J.O."/>
            <person name="Osborne J."/>
            <person name="Ding L."/>
            <person name="Meyer R."/>
            <person name="Sabo A."/>
            <person name="Shotland Y."/>
            <person name="Sinha P."/>
            <person name="Wohldmann P.E."/>
            <person name="Cook L.L."/>
            <person name="Hickenbotham M.T."/>
            <person name="Eldred J."/>
            <person name="Williams D."/>
            <person name="Jones T.A."/>
            <person name="She X."/>
            <person name="Ciccarelli F.D."/>
            <person name="Izaurralde E."/>
            <person name="Taylor J."/>
            <person name="Schmutz J."/>
            <person name="Myers R.M."/>
            <person name="Cox D.R."/>
            <person name="Huang X."/>
            <person name="McPherson J.D."/>
            <person name="Mardis E.R."/>
            <person name="Clifton S.W."/>
            <person name="Warren W.C."/>
            <person name="Chinwalla A.T."/>
            <person name="Eddy S.R."/>
            <person name="Marra M.A."/>
            <person name="Ovcharenko I."/>
            <person name="Furey T.S."/>
            <person name="Miller W."/>
            <person name="Eichler E.E."/>
            <person name="Bork P."/>
            <person name="Suyama M."/>
            <person name="Torrents D."/>
            <person name="Waterston R.H."/>
            <person name="Wilson R.K."/>
        </authorList>
    </citation>
    <scope>NUCLEOTIDE SEQUENCE [LARGE SCALE GENOMIC DNA]</scope>
</reference>
<reference key="6">
    <citation type="journal article" date="2004" name="Genome Res.">
        <title>The status, quality, and expansion of the NIH full-length cDNA project: the Mammalian Gene Collection (MGC).</title>
        <authorList>
            <consortium name="The MGC Project Team"/>
        </authorList>
    </citation>
    <scope>NUCLEOTIDE SEQUENCE [LARGE SCALE MRNA] (ISOFORM 2)</scope>
    <source>
        <tissue>Liver</tissue>
    </source>
</reference>
<reference key="7">
    <citation type="journal article" date="2000" name="J. Immunol.">
        <title>Regulated production and molecular diversity of human liver and activation-regulated chemokine/macrophage inflammatory protein-3 alpha from normal and transformed cells.</title>
        <authorList>
            <person name="Schutyser E."/>
            <person name="Struyf S."/>
            <person name="Menten P."/>
            <person name="Lenaerts J.-P."/>
            <person name="Conings R."/>
            <person name="Put W."/>
            <person name="Wuyts A."/>
            <person name="Proost P."/>
            <person name="Van Damme J."/>
        </authorList>
    </citation>
    <scope>IDENTIFICATION OF CCL20(1-67); CCL20(1-64) AND CCL20(2-70)</scope>
    <scope>PROTEOLYTIC PROCESSING OF C-TERMINAL</scope>
    <scope>SUBCELLULAR LOCATION</scope>
    <scope>FUNCTION</scope>
</reference>
<reference key="8">
    <citation type="journal article" date="2010" name="J. Biol. Chem.">
        <title>Specific binding and chemotactic activity of mBD4 and its functional orthologue hBD2 to CCR6-expressing cells.</title>
        <authorList>
            <person name="Roehrl J."/>
            <person name="Yang D."/>
            <person name="Oppenheim J.J."/>
            <person name="Hehlgans T."/>
        </authorList>
    </citation>
    <scope>FUNCTION</scope>
    <scope>BINDING TO CCR6</scope>
</reference>
<reference key="9">
    <citation type="journal article" date="2011" name="Exp. Cell Res.">
        <title>CCR6 as a mediator of immunity in the lung and gut.</title>
        <authorList>
            <person name="Ito T."/>
            <person name="Carson W.F. IV"/>
            <person name="Cavassani K.A."/>
            <person name="Connett J.M."/>
            <person name="Kunkel S.L."/>
        </authorList>
    </citation>
    <scope>REVIEW</scope>
    <scope>FUNCTION</scope>
</reference>
<reference key="10">
    <citation type="journal article" date="2014" name="J. Cell. Physiol.">
        <title>A role for the chemokine receptor CCR6 in mammalian sperm motility and chemotaxis.</title>
        <authorList>
            <person name="Caballero-Campo P."/>
            <person name="Buffone M.G."/>
            <person name="Benencia F."/>
            <person name="Conejo-Garcia J.R."/>
            <person name="Rinaudo P.F."/>
            <person name="Gerton G.L."/>
        </authorList>
    </citation>
    <scope>FUNCTION</scope>
    <scope>TISSUE SPECIFICITY</scope>
</reference>
<reference key="11">
    <citation type="journal article" date="2014" name="Sci. Transl. Med.">
        <title>Deficient human beta-defensin 1 underlies male infertility associated with poor sperm motility and genital tract infection.</title>
        <authorList>
            <person name="Diao R."/>
            <person name="Fok K.L."/>
            <person name="Chen H."/>
            <person name="Yu M.K."/>
            <person name="Duan Y."/>
            <person name="Chung C.M."/>
            <person name="Li Z."/>
            <person name="Wu H."/>
            <person name="Li Z."/>
            <person name="Zhang H."/>
            <person name="Ji Z."/>
            <person name="Zhen W."/>
            <person name="Ng C.F."/>
            <person name="Gui Y."/>
            <person name="Cai Z."/>
            <person name="Chan H.C."/>
        </authorList>
    </citation>
    <scope>FUNCTION</scope>
</reference>
<reference key="12">
    <citation type="journal article" date="2002" name="J. Biol. Chem.">
        <title>The structure of human macrophage inflammatory protein-3alpha /CCL20. Linking antimicrobial and CC chemokine receptor-6-binding activities with human beta-defensins.</title>
        <authorList>
            <person name="Hoover D.M."/>
            <person name="Boulegue C."/>
            <person name="Yang D."/>
            <person name="Oppenheim J.J."/>
            <person name="Tucker K."/>
            <person name="Lu W."/>
            <person name="Lubkowski J."/>
        </authorList>
    </citation>
    <scope>X-RAY CRYSTALLOGRAPHY (1.7 ANGSTROMS) OF 27-96</scope>
    <scope>FUNCTION AS AN ANTIMICROBIAL PROTEIN</scope>
</reference>
<comment type="function">
    <text evidence="1 2 3 4 5 6 7 9 10 13">Acts as a ligand for C-C chemokine receptor CCR6. Signals through binding and activation of CCR6 and induces a strong chemotactic response and mobilization of intracellular calcium ions (PubMed:11035086, PubMed:11352563, PubMed:20068036). The ligand-receptor pair CCL20-CCR6 is responsible for the chemotaxis of dendritic cells (DC), effector/memory T-cells and B-cells and plays an important role at skin and mucosal surfaces under homeostatic and inflammatory conditions, as well as in pathology, including cancer and various autoimmune diseases (PubMed:21376174). CCL20 acts as a chemotactic factor that attracts lymphocytes and, slightly, neutrophils, but not monocytes (PubMed:11352563, PubMed:9038201). Involved in the recruitment of both the pro-inflammatory IL17 producing helper T-cells (Th17) and the regulatory T-cells (Treg) to sites of inflammation. Required for optimal migration of thymic natural regulatory T cells (nTregs) and DN1 early thymocyte progenitor cells (By similarity). C-terminal processed forms have been shown to be equally chemotactically active for leukocytes (PubMed:11035086). Positively regulates sperm motility and chemotaxis via its binding to CCR6 which triggers Ca2+ mobilization in the sperm which is important for its motility (PubMed:23765988, PubMed:25122636). Inhibits proliferation of myeloid progenitors in colony formation assays (PubMed:9129037). May be involved in formation and function of the mucosal lymphoid tissues by attracting lymphocytes and dendritic cells towards epithelial cells (By similarity). Possesses antibacterial activity towards E.coli ATCC 25922 and S.aureus ATCC 29213 (PubMed:12149255).</text>
</comment>
<comment type="interaction">
    <interactant intactId="EBI-3913209">
        <id>P78556</id>
    </interactant>
    <interactant intactId="EBI-2848366">
        <id>P13501</id>
        <label>CCL5</label>
    </interactant>
    <organismsDiffer>false</organismsDiffer>
    <experiments>2</experiments>
</comment>
<comment type="interaction">
    <interactant intactId="EBI-3913209">
        <id>P78556</id>
    </interactant>
    <interactant intactId="EBI-3913254">
        <id>P48061</id>
        <label>CXCL12</label>
    </interactant>
    <organismsDiffer>false</organismsDiffer>
    <experiments>2</experiments>
</comment>
<comment type="interaction">
    <interactant intactId="EBI-3913209">
        <id>P78556</id>
    </interactant>
    <interactant intactId="EBI-2565740">
        <id>P02776</id>
        <label>PF4</label>
    </interactant>
    <organismsDiffer>false</organismsDiffer>
    <experiments>2</experiments>
</comment>
<comment type="interaction">
    <interactant intactId="EBI-3913209">
        <id>P78556</id>
    </interactant>
    <interactant intactId="EBI-749285">
        <id>Q15311</id>
        <label>RALBP1</label>
    </interactant>
    <organismsDiffer>false</organismsDiffer>
    <experiments>2</experiments>
</comment>
<comment type="subcellular location">
    <subcellularLocation>
        <location evidence="2">Secreted</location>
    </subcellularLocation>
</comment>
<comment type="alternative products">
    <event type="alternative splicing"/>
    <isoform>
        <id>P78556-1</id>
        <name>1</name>
        <sequence type="displayed"/>
    </isoform>
    <isoform>
        <id>P78556-2</id>
        <name>2</name>
        <sequence type="described" ref="VSP_001061"/>
    </isoform>
</comment>
<comment type="tissue specificity">
    <text evidence="3 6 8 9 10">Expressed in the seminal plasma, endometrial fluid and follicular fluid (at protein level). Expressed predominantly in the liver, lymph nodes, appendix, peripheral blood lymphocytes, and fetal lung. Low levels seen in thymus, prostate, testis, small intestine and colon.</text>
</comment>
<comment type="induction">
    <text evidence="8 9 10">By bacterial lipopolysaccharides (LPS), TNF and IFNG/IFN-gamma. Induced by phorbol myristate acetate (PMA) in U-937 cell line and bowes melanoma. Repressed by IL10/interleukin-10.</text>
</comment>
<comment type="PTM">
    <text evidence="2">C-terminal processed forms which lack 1, 3 or 6 amino acids are produced by proteolytic cleavage after secretion from peripheral blood monocytes.</text>
</comment>
<comment type="similarity">
    <text evidence="15">Belongs to the intercrine beta (chemokine CC) family.</text>
</comment>
<comment type="online information" name="Wikipedia">
    <link uri="https://en.wikipedia.org/wiki/CCL20"/>
    <text>CCL20 entry</text>
</comment>
<gene>
    <name type="primary">CCL20</name>
    <name type="synonym">LARC</name>
    <name type="synonym">MIP3A</name>
    <name type="synonym">SCYA20</name>
</gene>
<organism>
    <name type="scientific">Homo sapiens</name>
    <name type="common">Human</name>
    <dbReference type="NCBI Taxonomy" id="9606"/>
    <lineage>
        <taxon>Eukaryota</taxon>
        <taxon>Metazoa</taxon>
        <taxon>Chordata</taxon>
        <taxon>Craniata</taxon>
        <taxon>Vertebrata</taxon>
        <taxon>Euteleostomi</taxon>
        <taxon>Mammalia</taxon>
        <taxon>Eutheria</taxon>
        <taxon>Euarchontoglires</taxon>
        <taxon>Primates</taxon>
        <taxon>Haplorrhini</taxon>
        <taxon>Catarrhini</taxon>
        <taxon>Hominidae</taxon>
        <taxon>Homo</taxon>
    </lineage>
</organism>
<keyword id="KW-0002">3D-structure</keyword>
<keyword id="KW-0025">Alternative splicing</keyword>
<keyword id="KW-0044">Antibiotic</keyword>
<keyword id="KW-0929">Antimicrobial</keyword>
<keyword id="KW-0145">Chemotaxis</keyword>
<keyword id="KW-0202">Cytokine</keyword>
<keyword id="KW-0903">Direct protein sequencing</keyword>
<keyword id="KW-1015">Disulfide bond</keyword>
<keyword id="KW-0395">Inflammatory response</keyword>
<keyword id="KW-1267">Proteomics identification</keyword>
<keyword id="KW-1185">Reference proteome</keyword>
<keyword id="KW-0964">Secreted</keyword>
<keyword id="KW-0732">Signal</keyword>